<organismHost>
    <name type="scientific">Homo sapiens</name>
    <name type="common">Human</name>
    <dbReference type="NCBI Taxonomy" id="9606"/>
</organismHost>
<protein>
    <recommendedName>
        <fullName evidence="1">Protein Rev</fullName>
    </recommendedName>
    <alternativeName>
        <fullName evidence="1">ART/TRS</fullName>
    </alternativeName>
    <alternativeName>
        <fullName evidence="1">Anti-repression transactivator</fullName>
    </alternativeName>
    <alternativeName>
        <fullName evidence="1">Regulator of expression of viral proteins</fullName>
    </alternativeName>
</protein>
<comment type="function">
    <text evidence="1">Escorts unspliced or incompletely spliced viral pre-mRNAs (late transcripts) out of the nucleus of infected cells. These pre-mRNAs carry a recognition sequence called Rev responsive element (RRE) located in the env gene, that is not present in fully spliced viral mRNAs (early transcripts). This function is essential since most viral proteins are translated from unspliced or partially spliced pre-mRNAs which cannot exit the nucleus by the pathway used by fully processed cellular mRNAs. Rev itself is translated from a fully spliced mRNA that readily exits the nucleus. Rev's nuclear localization signal (NLS) binds directly to KPNB1/Importin beta-1 without previous binding to KPNA1/Importin alpha-1. KPNB1 binds to the GDP bound form of RAN (Ran-GDP) and targets Rev to the nucleus. In the nucleus, the conversion from Ran-GDP to Ran-GTP dissociates Rev from KPNB1 and allows Rev's binding to the RRE in viral pre-mRNAs. Rev multimerization on the RRE via cooperative assembly exposes its nuclear export signal (NES) to the surface. Rev can then form a complex with XPO1/CRM1 and Ran-GTP, leading to nuclear export of the complex. Conversion from Ran-GTP to Ran-GDP mediates dissociation of the Rev/RRE/XPO1/RAN complex, so that Rev can return to the nucleus for a subsequent round of export. Beside KPNB1, also seems to interact with TNPO1/Transportin-1, RANBP5/IPO5 and IPO7/RANBP7 for nuclear import. The nucleoporin-like HRB/RIP is an essential cofactor that probably indirectly interacts with Rev to release HIV RNAs from the perinuclear region to the cytoplasm.</text>
</comment>
<comment type="subunit">
    <text evidence="1">Homomultimer; when bound to the RRE. Multimeric assembly is essential for activity and may involve XPO1. Binds to human KPNB1, XPO1, TNPO1, RANBP5 and IPO7. Interacts with the viral Integrase. Interacts with human KHDRBS1. Interacts with human NAP1; this interaction decreases Rev multimerization and stimulates its activity. Interacts with human DEAD-box helicases DDX3 and DDX24; these interactions may serve for viral RNA export to the cytoplasm and packaging, respectively. Interacts with human PSIP1; this interaction may inhibit HIV-1 DNA integration by promoting dissociation of the Integrase-LEDGF/p75 complex.</text>
</comment>
<comment type="subcellular location">
    <subcellularLocation>
        <location evidence="1">Host nucleus</location>
        <location evidence="1">Host nucleolus</location>
    </subcellularLocation>
    <subcellularLocation>
        <location evidence="1">Host cytoplasm</location>
    </subcellularLocation>
    <text evidence="1">The presence of both nuclear import and nuclear export signals leads to continuous shuttling between the nucleus and cytoplasm.</text>
</comment>
<comment type="domain">
    <text evidence="1">The RNA-binding motif binds to the RRE, a 240 bp stem-and-loop structure present in incompletely spliced viral pre-mRNAs. This region also contains the NLS which mediates nuclear localization via KPNB1 binding and, when the N-terminal sequence is present, nucleolar targeting. These overlapping functions prevent Rev bound to RRE from undesirable return to the nucleus. When Rev binds the RRE, the NLS becomes masked while the NES remains accessible. The leucine-rich NES mediates binding to human XPO1.</text>
</comment>
<comment type="PTM">
    <text evidence="1">Asymmetrically arginine dimethylated at one site by host PRMT6. Methylation impairs the RNA-binding activity and export of viral RNA from the nucleus to the cytoplasm.</text>
</comment>
<comment type="PTM">
    <text evidence="1">Phosphorylated by protein kinase CK2. Presence of, and maybe binding to the N-terminus of the regulatory beta subunit of CK2 is necessary for CK2-mediated Rev's phosphorylation.</text>
</comment>
<comment type="miscellaneous">
    <text evidence="1">HIV-1 lineages are divided in three main groups, M (for Major), O (for Outlier), and N (for New, or Non-M, Non-O). The vast majority of strains found worldwide belong to the group M. Group O seems to be endemic to and largely confined to Cameroon and neighboring countries in West Central Africa, where these viruses represent a small minority of HIV-1 strains. The group N is represented by a limited number of isolates from Cameroonian persons. The group M is further subdivided in 9 clades or subtypes (A to D, F to H, J and K).</text>
</comment>
<comment type="similarity">
    <text evidence="1">Belongs to the HIV-1 REV protein family.</text>
</comment>
<accession>P05864</accession>
<gene>
    <name evidence="1" type="primary">rev</name>
</gene>
<sequence length="106" mass="12090">ELIEAVRLIKFLYQSNPPPKPEGTRQARRNRRRRWRERQRQIHSISERILSTYLGRSAEPVPLQLPPLERLTLDCNEDCGTSGTQGVGSPQILVESPTVLESGTKE</sequence>
<dbReference type="EMBL" id="K02011">
    <property type="protein sequence ID" value="AAA44659.1"/>
    <property type="molecule type" value="Genomic_RNA"/>
</dbReference>
<dbReference type="GO" id="GO:0030430">
    <property type="term" value="C:host cell cytoplasm"/>
    <property type="evidence" value="ECO:0007669"/>
    <property type="project" value="UniProtKB-SubCell"/>
</dbReference>
<dbReference type="GO" id="GO:0044196">
    <property type="term" value="C:host cell nucleolus"/>
    <property type="evidence" value="ECO:0007669"/>
    <property type="project" value="UniProtKB-SubCell"/>
</dbReference>
<dbReference type="GO" id="GO:0003700">
    <property type="term" value="F:DNA-binding transcription factor activity"/>
    <property type="evidence" value="ECO:0007669"/>
    <property type="project" value="InterPro"/>
</dbReference>
<dbReference type="GO" id="GO:0003723">
    <property type="term" value="F:RNA binding"/>
    <property type="evidence" value="ECO:0007669"/>
    <property type="project" value="UniProtKB-KW"/>
</dbReference>
<dbReference type="GO" id="GO:0051028">
    <property type="term" value="P:mRNA transport"/>
    <property type="evidence" value="ECO:0007669"/>
    <property type="project" value="UniProtKB-KW"/>
</dbReference>
<dbReference type="Gene3D" id="6.10.140.630">
    <property type="match status" value="1"/>
</dbReference>
<dbReference type="HAMAP" id="MF_04077">
    <property type="entry name" value="REV_HIV1"/>
    <property type="match status" value="1"/>
</dbReference>
<dbReference type="InterPro" id="IPR000625">
    <property type="entry name" value="REV_protein"/>
</dbReference>
<dbReference type="Pfam" id="PF00424">
    <property type="entry name" value="REV"/>
    <property type="match status" value="1"/>
</dbReference>
<evidence type="ECO:0000255" key="1">
    <source>
        <dbReference type="HAMAP-Rule" id="MF_04077"/>
    </source>
</evidence>
<evidence type="ECO:0000256" key="2">
    <source>
        <dbReference type="SAM" id="MobiDB-lite"/>
    </source>
</evidence>
<keyword id="KW-0014">AIDS</keyword>
<keyword id="KW-1035">Host cytoplasm</keyword>
<keyword id="KW-1048">Host nucleus</keyword>
<keyword id="KW-0945">Host-virus interaction</keyword>
<keyword id="KW-0488">Methylation</keyword>
<keyword id="KW-0509">mRNA transport</keyword>
<keyword id="KW-0597">Phosphoprotein</keyword>
<keyword id="KW-0694">RNA-binding</keyword>
<keyword id="KW-0813">Transport</keyword>
<organism>
    <name type="scientific">Human immunodeficiency virus type 1 group M subtype B (isolate BH8)</name>
    <name type="common">HIV-1</name>
    <dbReference type="NCBI Taxonomy" id="11684"/>
    <lineage>
        <taxon>Viruses</taxon>
        <taxon>Riboviria</taxon>
        <taxon>Pararnavirae</taxon>
        <taxon>Artverviricota</taxon>
        <taxon>Revtraviricetes</taxon>
        <taxon>Ortervirales</taxon>
        <taxon>Retroviridae</taxon>
        <taxon>Orthoretrovirinae</taxon>
        <taxon>Lentivirus</taxon>
        <taxon>Human immunodeficiency virus type 1</taxon>
    </lineage>
</organism>
<name>REV_HV1B8</name>
<proteinExistence type="inferred from homology"/>
<reference key="1">
    <citation type="journal article" date="1985" name="Nature">
        <title>Complete nucleotide sequence of the AIDS virus, HTLV-III.</title>
        <authorList>
            <person name="Ratner L."/>
            <person name="Haseltine W.A."/>
            <person name="Patarca R."/>
            <person name="Livak K.J."/>
            <person name="Starcich B.R."/>
            <person name="Josephs S.F."/>
            <person name="Doran E.R."/>
            <person name="Rafalski J.A."/>
            <person name="Whitehorn E.A."/>
            <person name="Baumeister K."/>
            <person name="Ivanoff L."/>
            <person name="Petteway S.R. Jr."/>
            <person name="Pearson M.L."/>
            <person name="Lautenberger J.A."/>
            <person name="Papas T.S."/>
            <person name="Ghrayeb J."/>
            <person name="Chang N.T."/>
            <person name="Gallo R.C."/>
            <person name="Wong-Staal F."/>
        </authorList>
    </citation>
    <scope>NUCLEOTIDE SEQUENCE [GENOMIC RNA]</scope>
</reference>
<reference key="2">
    <citation type="journal article" date="1999" name="Arch. Biochem. Biophys.">
        <title>The ins and outs of HIV Rev.</title>
        <authorList>
            <person name="Hope T.J."/>
        </authorList>
    </citation>
    <scope>REVIEW</scope>
</reference>
<feature type="chain" id="PRO_0000085258" description="Protein Rev">
    <location>
        <begin position="1" status="less than"/>
        <end position="106"/>
    </location>
</feature>
<feature type="region of interest" description="Homomultimerization" evidence="1">
    <location>
        <begin position="8"/>
        <end position="16"/>
    </location>
</feature>
<feature type="region of interest" description="Disordered" evidence="2">
    <location>
        <begin position="14"/>
        <end position="39"/>
    </location>
</feature>
<feature type="region of interest" description="Disordered" evidence="2">
    <location>
        <begin position="82"/>
        <end position="106"/>
    </location>
</feature>
<feature type="short sequence motif" description="Nuclear localization signal and RNA-binding (RRE)" evidence="1">
    <location>
        <begin position="24"/>
        <end position="40"/>
    </location>
</feature>
<feature type="short sequence motif" description="Nuclear export signal and binding to XPO1" evidence="1">
    <location>
        <begin position="63"/>
        <end position="74"/>
    </location>
</feature>
<feature type="compositionally biased region" description="Basic residues" evidence="2">
    <location>
        <begin position="26"/>
        <end position="37"/>
    </location>
</feature>
<feature type="modified residue" description="Phosphoserine; by host" evidence="1">
    <location>
        <position position="82"/>
    </location>
</feature>
<feature type="modified residue" description="Phosphoserine; by host" evidence="1">
    <location>
        <position position="89"/>
    </location>
</feature>
<feature type="non-terminal residue">
    <location>
        <position position="1"/>
    </location>
</feature>